<gene>
    <name evidence="1" type="primary">psbC</name>
</gene>
<feature type="propeptide" id="PRO_0000431176" evidence="1">
    <location>
        <begin position="1"/>
        <end position="2"/>
    </location>
</feature>
<feature type="chain" id="PRO_0000361440" description="Photosystem II CP43 reaction center protein" evidence="1">
    <location>
        <begin position="3"/>
        <end position="461"/>
    </location>
</feature>
<feature type="transmembrane region" description="Helical" evidence="1">
    <location>
        <begin position="57"/>
        <end position="81"/>
    </location>
</feature>
<feature type="transmembrane region" description="Helical" evidence="1">
    <location>
        <begin position="122"/>
        <end position="143"/>
    </location>
</feature>
<feature type="transmembrane region" description="Helical" evidence="1">
    <location>
        <begin position="166"/>
        <end position="188"/>
    </location>
</feature>
<feature type="transmembrane region" description="Helical" evidence="1">
    <location>
        <begin position="243"/>
        <end position="263"/>
    </location>
</feature>
<feature type="transmembrane region" description="Helical" evidence="1">
    <location>
        <begin position="279"/>
        <end position="300"/>
    </location>
</feature>
<feature type="transmembrane region" description="Helical" evidence="1">
    <location>
        <begin position="435"/>
        <end position="459"/>
    </location>
</feature>
<feature type="binding site" evidence="1">
    <location>
        <position position="355"/>
    </location>
    <ligand>
        <name>[CaMn4O5] cluster</name>
        <dbReference type="ChEBI" id="CHEBI:189552"/>
    </ligand>
</feature>
<feature type="modified residue" description="N-acetylthreonine" evidence="1">
    <location>
        <position position="3"/>
    </location>
</feature>
<feature type="modified residue" description="Phosphothreonine" evidence="1">
    <location>
        <position position="3"/>
    </location>
</feature>
<dbReference type="EMBL" id="EF587342">
    <property type="protein sequence ID" value="ABU88181.1"/>
    <property type="molecule type" value="Genomic_DNA"/>
</dbReference>
<dbReference type="EMBL" id="EU677193">
    <property type="protein sequence ID" value="ACC97228.1"/>
    <property type="molecule type" value="Genomic_DNA"/>
</dbReference>
<dbReference type="RefSeq" id="YP_002000374.1">
    <property type="nucleotide sequence ID" value="NC_011031.1"/>
</dbReference>
<dbReference type="SMR" id="B2X1W8"/>
<dbReference type="GeneID" id="6440144"/>
<dbReference type="GO" id="GO:0009535">
    <property type="term" value="C:chloroplast thylakoid membrane"/>
    <property type="evidence" value="ECO:0007669"/>
    <property type="project" value="UniProtKB-SubCell"/>
</dbReference>
<dbReference type="GO" id="GO:0009523">
    <property type="term" value="C:photosystem II"/>
    <property type="evidence" value="ECO:0007669"/>
    <property type="project" value="UniProtKB-KW"/>
</dbReference>
<dbReference type="GO" id="GO:0016168">
    <property type="term" value="F:chlorophyll binding"/>
    <property type="evidence" value="ECO:0007669"/>
    <property type="project" value="UniProtKB-UniRule"/>
</dbReference>
<dbReference type="GO" id="GO:0045156">
    <property type="term" value="F:electron transporter, transferring electrons within the cyclic electron transport pathway of photosynthesis activity"/>
    <property type="evidence" value="ECO:0007669"/>
    <property type="project" value="InterPro"/>
</dbReference>
<dbReference type="GO" id="GO:0046872">
    <property type="term" value="F:metal ion binding"/>
    <property type="evidence" value="ECO:0007669"/>
    <property type="project" value="UniProtKB-KW"/>
</dbReference>
<dbReference type="GO" id="GO:0009772">
    <property type="term" value="P:photosynthetic electron transport in photosystem II"/>
    <property type="evidence" value="ECO:0007669"/>
    <property type="project" value="InterPro"/>
</dbReference>
<dbReference type="FunFam" id="1.10.10.670:FF:000001">
    <property type="entry name" value="Photosystem II CP43 reaction center protein"/>
    <property type="match status" value="1"/>
</dbReference>
<dbReference type="Gene3D" id="1.10.10.670">
    <property type="entry name" value="photosystem ii from thermosynechococcus elongatus"/>
    <property type="match status" value="1"/>
</dbReference>
<dbReference type="HAMAP" id="MF_01496">
    <property type="entry name" value="PSII_PsbC_CP43"/>
    <property type="match status" value="1"/>
</dbReference>
<dbReference type="InterPro" id="IPR000932">
    <property type="entry name" value="PS_antenna-like"/>
</dbReference>
<dbReference type="InterPro" id="IPR036001">
    <property type="entry name" value="PS_II_antenna-like_sf"/>
</dbReference>
<dbReference type="InterPro" id="IPR005869">
    <property type="entry name" value="PSII_PsbC"/>
</dbReference>
<dbReference type="InterPro" id="IPR044900">
    <property type="entry name" value="PSII_PsbC_sf"/>
</dbReference>
<dbReference type="NCBIfam" id="TIGR01153">
    <property type="entry name" value="psbC"/>
    <property type="match status" value="1"/>
</dbReference>
<dbReference type="Pfam" id="PF00421">
    <property type="entry name" value="PSII"/>
    <property type="match status" value="1"/>
</dbReference>
<dbReference type="SUPFAM" id="SSF161077">
    <property type="entry name" value="Photosystem II antenna protein-like"/>
    <property type="match status" value="1"/>
</dbReference>
<name>PSBC_OEDCA</name>
<evidence type="ECO:0000255" key="1">
    <source>
        <dbReference type="HAMAP-Rule" id="MF_01496"/>
    </source>
</evidence>
<organism>
    <name type="scientific">Oedogonium cardiacum</name>
    <name type="common">Filamentous green alga</name>
    <dbReference type="NCBI Taxonomy" id="55995"/>
    <lineage>
        <taxon>Eukaryota</taxon>
        <taxon>Viridiplantae</taxon>
        <taxon>Chlorophyta</taxon>
        <taxon>core chlorophytes</taxon>
        <taxon>Chlorophyceae</taxon>
        <taxon>OCC clade</taxon>
        <taxon>Oedogoniales</taxon>
        <taxon>Oedogoniaceae</taxon>
        <taxon>Oedogonium</taxon>
    </lineage>
</organism>
<comment type="function">
    <text evidence="1">One of the components of the core complex of photosystem II (PSII). It binds chlorophyll and helps catalyze the primary light-induced photochemical processes of PSII. PSII is a light-driven water:plastoquinone oxidoreductase, using light energy to abstract electrons from H(2)O, generating O(2) and a proton gradient subsequently used for ATP formation.</text>
</comment>
<comment type="cofactor">
    <text evidence="1">Binds multiple chlorophylls and provides some of the ligands for the Ca-4Mn-5O cluster of the oxygen-evolving complex. It may also provide a ligand for a Cl- that is required for oxygen evolution. PSII binds additional chlorophylls, carotenoids and specific lipids.</text>
</comment>
<comment type="subunit">
    <text evidence="1">PSII is composed of 1 copy each of membrane proteins PsbA, PsbB, PsbC, PsbD, PsbE, PsbF, PsbH, PsbI, PsbJ, PsbK, PsbL, PsbM, PsbT, PsbX, PsbY, PsbZ, Psb30/Ycf12, at least 3 peripheral proteins of the oxygen-evolving complex and a large number of cofactors. It forms dimeric complexes.</text>
</comment>
<comment type="subcellular location">
    <subcellularLocation>
        <location evidence="1">Plastid</location>
        <location evidence="1">Chloroplast thylakoid membrane</location>
        <topology evidence="1">Multi-pass membrane protein</topology>
    </subcellularLocation>
</comment>
<comment type="similarity">
    <text evidence="1">Belongs to the PsbB/PsbC family. PsbC subfamily.</text>
</comment>
<keyword id="KW-0007">Acetylation</keyword>
<keyword id="KW-0148">Chlorophyll</keyword>
<keyword id="KW-0150">Chloroplast</keyword>
<keyword id="KW-0157">Chromophore</keyword>
<keyword id="KW-0464">Manganese</keyword>
<keyword id="KW-0472">Membrane</keyword>
<keyword id="KW-0479">Metal-binding</keyword>
<keyword id="KW-0597">Phosphoprotein</keyword>
<keyword id="KW-0602">Photosynthesis</keyword>
<keyword id="KW-0604">Photosystem II</keyword>
<keyword id="KW-0934">Plastid</keyword>
<keyword id="KW-0793">Thylakoid</keyword>
<keyword id="KW-0812">Transmembrane</keyword>
<keyword id="KW-1133">Transmembrane helix</keyword>
<geneLocation type="chloroplast"/>
<reference key="1">
    <citation type="journal article" date="2008" name="J. Phycol.">
        <title>Deep division in the Chlorophyceae (Chlorophyta) revealed by chloroplast phylogenomic analyseS.</title>
        <authorList>
            <person name="Turmel M."/>
            <person name="Brouard J.-S."/>
            <person name="Gagnon C."/>
            <person name="Otis C."/>
            <person name="Lemieux C."/>
        </authorList>
        <dbReference type="AGRICOLA" id="IND44059346"/>
    </citation>
    <scope>NUCLEOTIDE SEQUENCE [GENOMIC DNA]</scope>
    <source>
        <strain>SAG 575-1b / CCAP 575/1B / UTEX LB 40</strain>
    </source>
</reference>
<reference key="2">
    <citation type="journal article" date="2008" name="BMC Genomics">
        <title>Chloroplast DNA sequence of the green alga Oedogonium cardiacum (Chlorophyceae): unique genome architecture, derived characters shared with the Chaetophorales and novel genes acquired through horizontal transfer.</title>
        <authorList>
            <person name="Brouard J.-S."/>
            <person name="Otis C."/>
            <person name="Lemieux C."/>
            <person name="Turmel M."/>
        </authorList>
    </citation>
    <scope>NUCLEOTIDE SEQUENCE [LARGE SCALE GENOMIC DNA]</scope>
    <source>
        <strain>SAG 575-1b / CCAP 575/1B / UTEX LB 40</strain>
    </source>
</reference>
<protein>
    <recommendedName>
        <fullName evidence="1">Photosystem II CP43 reaction center protein</fullName>
    </recommendedName>
    <alternativeName>
        <fullName evidence="1">PSII 43 kDa protein</fullName>
    </alternativeName>
    <alternativeName>
        <fullName evidence="1">Protein CP-43</fullName>
    </alternativeName>
</protein>
<proteinExistence type="inferred from homology"/>
<sequence length="461" mass="50535">METLYNGTLTLGGKDQESTGFAWWAGNARLINLSGRLLGAHVAHAGLIVFWAGAMNLFEVAHFVPEKPMYEQGLILLPHLATLGYGVGPGGEIIDTFPYFVSGVLHLISSAVLGFGGVYHSLIGPETLEETFPFFGYVWKDKNKMTNILGAHLIILGIGAWLLVWKALYFGGVYDTWAPGGGDVRIITNPTTNPSVIFGYLLKSPFGGDGWIVSVDNMEDIIGGHIYIGTINILGGLWHVFTQPWAWTRRAFVWSGEAYLSYSLAAISVMGFVACCMSWFNNTAYPSEFYGPTGPEASQSQAFTFLVRDQRLGANVASAQGPTGLGKYLMRSPTGEIIFGGETMRFWDFRGPWLEPLRGPNGLDLNKLKNDIQPWQERRAAEYMTHAPLGSLNSVGGVATEINATNFVSPRSWLATSHFCLGFFFFVAHLWHAGRARAAAAGFEKGIDRFNEPTLSLRPLD</sequence>
<accession>B2X1W8</accession>